<evidence type="ECO:0000255" key="1">
    <source>
        <dbReference type="HAMAP-Rule" id="MF_01165"/>
    </source>
</evidence>
<gene>
    <name evidence="1" type="primary">arnT</name>
    <name type="ordered locus">Ecok1_21550</name>
    <name type="ORF">APECO1_4304</name>
</gene>
<proteinExistence type="inferred from homology"/>
<reference key="1">
    <citation type="journal article" date="2007" name="J. Bacteriol.">
        <title>The genome sequence of avian pathogenic Escherichia coli strain O1:K1:H7 shares strong similarities with human extraintestinal pathogenic E. coli genomes.</title>
        <authorList>
            <person name="Johnson T.J."/>
            <person name="Kariyawasam S."/>
            <person name="Wannemuehler Y."/>
            <person name="Mangiamele P."/>
            <person name="Johnson S.J."/>
            <person name="Doetkott C."/>
            <person name="Skyberg J.A."/>
            <person name="Lynne A.M."/>
            <person name="Johnson J.R."/>
            <person name="Nolan L.K."/>
        </authorList>
    </citation>
    <scope>NUCLEOTIDE SEQUENCE [LARGE SCALE GENOMIC DNA]</scope>
</reference>
<feature type="chain" id="PRO_0000380004" description="Undecaprenyl phosphate-alpha-4-amino-4-deoxy-L-arabinose arabinosyl transferase">
    <location>
        <begin position="1"/>
        <end position="550"/>
    </location>
</feature>
<feature type="transmembrane region" description="Helical" evidence="1">
    <location>
        <begin position="7"/>
        <end position="27"/>
    </location>
</feature>
<feature type="transmembrane region" description="Helical" evidence="1">
    <location>
        <begin position="81"/>
        <end position="101"/>
    </location>
</feature>
<feature type="transmembrane region" description="Helical" evidence="1">
    <location>
        <begin position="111"/>
        <end position="133"/>
    </location>
</feature>
<feature type="transmembrane region" description="Helical" evidence="1">
    <location>
        <begin position="137"/>
        <end position="154"/>
    </location>
</feature>
<feature type="transmembrane region" description="Helical" evidence="1">
    <location>
        <begin position="165"/>
        <end position="185"/>
    </location>
</feature>
<feature type="transmembrane region" description="Helical" evidence="1">
    <location>
        <begin position="204"/>
        <end position="224"/>
    </location>
</feature>
<feature type="transmembrane region" description="Helical" evidence="1">
    <location>
        <begin position="263"/>
        <end position="283"/>
    </location>
</feature>
<feature type="transmembrane region" description="Helical" evidence="1">
    <location>
        <begin position="288"/>
        <end position="308"/>
    </location>
</feature>
<feature type="transmembrane region" description="Helical" evidence="1">
    <location>
        <begin position="315"/>
        <end position="335"/>
    </location>
</feature>
<feature type="transmembrane region" description="Helical" evidence="1">
    <location>
        <begin position="346"/>
        <end position="366"/>
    </location>
</feature>
<feature type="transmembrane region" description="Helical" evidence="1">
    <location>
        <begin position="382"/>
        <end position="402"/>
    </location>
</feature>
<feature type="transmembrane region" description="Helical" evidence="1">
    <location>
        <begin position="406"/>
        <end position="426"/>
    </location>
</feature>
<organism>
    <name type="scientific">Escherichia coli O1:K1 / APEC</name>
    <dbReference type="NCBI Taxonomy" id="405955"/>
    <lineage>
        <taxon>Bacteria</taxon>
        <taxon>Pseudomonadati</taxon>
        <taxon>Pseudomonadota</taxon>
        <taxon>Gammaproteobacteria</taxon>
        <taxon>Enterobacterales</taxon>
        <taxon>Enterobacteriaceae</taxon>
        <taxon>Escherichia</taxon>
    </lineage>
</organism>
<accession>A1ADA9</accession>
<protein>
    <recommendedName>
        <fullName evidence="1">Undecaprenyl phosphate-alpha-4-amino-4-deoxy-L-arabinose arabinosyl transferase</fullName>
        <ecNumber evidence="1">2.4.2.43</ecNumber>
    </recommendedName>
    <alternativeName>
        <fullName evidence="1">4-amino-4-deoxy-L-arabinose lipid A transferase</fullName>
    </alternativeName>
    <alternativeName>
        <fullName evidence="1">Lipid IV(A) 4-amino-4-deoxy-L-arabinosyltransferase</fullName>
    </alternativeName>
    <alternativeName>
        <fullName evidence="1">Undecaprenyl phosphate-alpha-L-Ara4N transferase</fullName>
    </alternativeName>
</protein>
<comment type="function">
    <text evidence="1">Catalyzes the transfer of the L-Ara4N moiety of the glycolipid undecaprenyl phosphate-alpha-L-Ara4N to lipid A. The modified arabinose is attached to lipid A and is required for resistance to polymyxin and cationic antimicrobial peptides.</text>
</comment>
<comment type="catalytic activity">
    <reaction evidence="1">
        <text>4-amino-4-deoxy-alpha-L-arabinopyranosyl di-trans,octa-cis-undecaprenyl phosphate + lipid IVA = lipid IIA + di-trans,octa-cis-undecaprenyl phosphate.</text>
        <dbReference type="EC" id="2.4.2.43"/>
    </reaction>
</comment>
<comment type="pathway">
    <text evidence="1">Lipopolysaccharide metabolism; 4-amino-4-deoxy-beta-L-arabinose-lipid A biosynthesis.</text>
</comment>
<comment type="subcellular location">
    <subcellularLocation>
        <location evidence="1">Cell inner membrane</location>
        <topology evidence="1">Multi-pass membrane protein</topology>
    </subcellularLocation>
</comment>
<comment type="similarity">
    <text evidence="1">Belongs to the glycosyltransferase 83 family.</text>
</comment>
<dbReference type="EC" id="2.4.2.43" evidence="1"/>
<dbReference type="EMBL" id="CP000468">
    <property type="protein sequence ID" value="ABJ01649.1"/>
    <property type="molecule type" value="Genomic_DNA"/>
</dbReference>
<dbReference type="RefSeq" id="WP_000844070.1">
    <property type="nucleotide sequence ID" value="NZ_CADILS010000004.1"/>
</dbReference>
<dbReference type="SMR" id="A1ADA9"/>
<dbReference type="CAZy" id="GT83">
    <property type="family name" value="Glycosyltransferase Family 83"/>
</dbReference>
<dbReference type="KEGG" id="ecv:APECO1_4304"/>
<dbReference type="HOGENOM" id="CLU_019200_2_1_6"/>
<dbReference type="UniPathway" id="UPA00037"/>
<dbReference type="Proteomes" id="UP000008216">
    <property type="component" value="Chromosome"/>
</dbReference>
<dbReference type="GO" id="GO:0005886">
    <property type="term" value="C:plasma membrane"/>
    <property type="evidence" value="ECO:0007669"/>
    <property type="project" value="UniProtKB-SubCell"/>
</dbReference>
<dbReference type="GO" id="GO:0103015">
    <property type="term" value="F:4-amino-4-deoxy-L-arabinose transferase activity"/>
    <property type="evidence" value="ECO:0007669"/>
    <property type="project" value="UniProtKB-EC"/>
</dbReference>
<dbReference type="GO" id="GO:0000030">
    <property type="term" value="F:mannosyltransferase activity"/>
    <property type="evidence" value="ECO:0007669"/>
    <property type="project" value="InterPro"/>
</dbReference>
<dbReference type="GO" id="GO:0009245">
    <property type="term" value="P:lipid A biosynthetic process"/>
    <property type="evidence" value="ECO:0007669"/>
    <property type="project" value="UniProtKB-UniRule"/>
</dbReference>
<dbReference type="GO" id="GO:0009103">
    <property type="term" value="P:lipopolysaccharide biosynthetic process"/>
    <property type="evidence" value="ECO:0007669"/>
    <property type="project" value="UniProtKB-KW"/>
</dbReference>
<dbReference type="GO" id="GO:0006493">
    <property type="term" value="P:protein O-linked glycosylation"/>
    <property type="evidence" value="ECO:0007669"/>
    <property type="project" value="InterPro"/>
</dbReference>
<dbReference type="GO" id="GO:0010041">
    <property type="term" value="P:response to iron(III) ion"/>
    <property type="evidence" value="ECO:0007669"/>
    <property type="project" value="TreeGrafter"/>
</dbReference>
<dbReference type="HAMAP" id="MF_01165">
    <property type="entry name" value="ArnT_transfer"/>
    <property type="match status" value="1"/>
</dbReference>
<dbReference type="InterPro" id="IPR022839">
    <property type="entry name" value="ArnT_tfrase"/>
</dbReference>
<dbReference type="InterPro" id="IPR003342">
    <property type="entry name" value="Glyco_trans_39/83"/>
</dbReference>
<dbReference type="InterPro" id="IPR050297">
    <property type="entry name" value="LipidA_mod_glycosyltrf_83"/>
</dbReference>
<dbReference type="NCBIfam" id="NF009784">
    <property type="entry name" value="PRK13279.1"/>
    <property type="match status" value="1"/>
</dbReference>
<dbReference type="PANTHER" id="PTHR33908">
    <property type="entry name" value="MANNOSYLTRANSFERASE YKCB-RELATED"/>
    <property type="match status" value="1"/>
</dbReference>
<dbReference type="PANTHER" id="PTHR33908:SF3">
    <property type="entry name" value="UNDECAPRENYL PHOSPHATE-ALPHA-4-AMINO-4-DEOXY-L-ARABINOSE ARABINOSYL TRANSFERASE"/>
    <property type="match status" value="1"/>
</dbReference>
<dbReference type="Pfam" id="PF02366">
    <property type="entry name" value="PMT"/>
    <property type="match status" value="1"/>
</dbReference>
<name>ARNT_ECOK1</name>
<keyword id="KW-0997">Cell inner membrane</keyword>
<keyword id="KW-1003">Cell membrane</keyword>
<keyword id="KW-0328">Glycosyltransferase</keyword>
<keyword id="KW-0441">Lipid A biosynthesis</keyword>
<keyword id="KW-0444">Lipid biosynthesis</keyword>
<keyword id="KW-0443">Lipid metabolism</keyword>
<keyword id="KW-0448">Lipopolysaccharide biosynthesis</keyword>
<keyword id="KW-0472">Membrane</keyword>
<keyword id="KW-1185">Reference proteome</keyword>
<keyword id="KW-0808">Transferase</keyword>
<keyword id="KW-0812">Transmembrane</keyword>
<keyword id="KW-1133">Transmembrane helix</keyword>
<sequence length="550" mass="62565">MKSVRYLIGLFAFIACYYLLPISTRLLWQPDETRYAEISREMLASGDWIVPHLLGLRYFEKPIAGYWINSIGQWLFGANNFGVRAGVIFATLLTAALVTWFTLRLWRNKRLALLATVIYLSLFIVYAIGTYAVLDPFIAFWLVAGMCSFWLAMQAQTWKGKSAGFLLLGITCGMGVMTKGFLALAVPVLSVLPWVATQKRWKDLFIYGWLAVISCVLTVLPWGLAIAQREPDFWHYFFWVEHIQRFALDDAQHRAPFWYYLPVIIAGSLPWLGLLPGALYAGWKNRKHSATVYLLSWTIMPLLFFSVAKGKLPTYILSCFAPLAMLMAHYALLAAKNNPLALRINGWINIAFGVTGIIATFVVSPWGPMNTPVWQTFESYKVFCAWSIFSLWAFFGWYTLTNVEKTWPFAALCPLGLALLVGFSIPDRVMEGKHPQFFVEMTQESLQPSRYILTDSVGVAAGLAWSLQRDDIIMYRQTGELKYGLNYPDAKGRFVSGDEFANWLNQHRQEGIITLVLSVDRDEDINSLAIPPADVIDRQERLVLIQYRPK</sequence>